<accession>B0JY34</accession>
<keyword id="KW-0687">Ribonucleoprotein</keyword>
<keyword id="KW-0689">Ribosomal protein</keyword>
<reference key="1">
    <citation type="journal article" date="2007" name="DNA Res.">
        <title>Complete genomic structure of the bloom-forming toxic cyanobacterium Microcystis aeruginosa NIES-843.</title>
        <authorList>
            <person name="Kaneko T."/>
            <person name="Nakajima N."/>
            <person name="Okamoto S."/>
            <person name="Suzuki I."/>
            <person name="Tanabe Y."/>
            <person name="Tamaoki M."/>
            <person name="Nakamura Y."/>
            <person name="Kasai F."/>
            <person name="Watanabe A."/>
            <person name="Kawashima K."/>
            <person name="Kishida Y."/>
            <person name="Ono A."/>
            <person name="Shimizu Y."/>
            <person name="Takahashi C."/>
            <person name="Minami C."/>
            <person name="Fujishiro T."/>
            <person name="Kohara M."/>
            <person name="Katoh M."/>
            <person name="Nakazaki N."/>
            <person name="Nakayama S."/>
            <person name="Yamada M."/>
            <person name="Tabata S."/>
            <person name="Watanabe M.M."/>
        </authorList>
    </citation>
    <scope>NUCLEOTIDE SEQUENCE [LARGE SCALE GENOMIC DNA]</scope>
    <source>
        <strain>NIES-843 / IAM M-247</strain>
    </source>
</reference>
<organism>
    <name type="scientific">Microcystis aeruginosa (strain NIES-843 / IAM M-2473)</name>
    <dbReference type="NCBI Taxonomy" id="449447"/>
    <lineage>
        <taxon>Bacteria</taxon>
        <taxon>Bacillati</taxon>
        <taxon>Cyanobacteriota</taxon>
        <taxon>Cyanophyceae</taxon>
        <taxon>Oscillatoriophycideae</taxon>
        <taxon>Chroococcales</taxon>
        <taxon>Microcystaceae</taxon>
        <taxon>Microcystis</taxon>
    </lineage>
</organism>
<feature type="chain" id="PRO_1000081822" description="Small ribosomal subunit protein uS9">
    <location>
        <begin position="1"/>
        <end position="137"/>
    </location>
</feature>
<feature type="region of interest" description="Disordered" evidence="2">
    <location>
        <begin position="100"/>
        <end position="137"/>
    </location>
</feature>
<feature type="compositionally biased region" description="Basic residues" evidence="2">
    <location>
        <begin position="118"/>
        <end position="137"/>
    </location>
</feature>
<proteinExistence type="inferred from homology"/>
<dbReference type="EMBL" id="AP009552">
    <property type="protein sequence ID" value="BAG05072.1"/>
    <property type="molecule type" value="Genomic_DNA"/>
</dbReference>
<dbReference type="RefSeq" id="WP_002760057.1">
    <property type="nucleotide sequence ID" value="NC_010296.1"/>
</dbReference>
<dbReference type="SMR" id="B0JY34"/>
<dbReference type="STRING" id="449447.MAE_52500"/>
<dbReference type="PaxDb" id="449447-MAE_52500"/>
<dbReference type="EnsemblBacteria" id="BAG05072">
    <property type="protein sequence ID" value="BAG05072"/>
    <property type="gene ID" value="MAE_52500"/>
</dbReference>
<dbReference type="GeneID" id="66705721"/>
<dbReference type="KEGG" id="mar:MAE_52500"/>
<dbReference type="eggNOG" id="COG0103">
    <property type="taxonomic scope" value="Bacteria"/>
</dbReference>
<dbReference type="HOGENOM" id="CLU_046483_2_1_3"/>
<dbReference type="BioCyc" id="MAER449447:MAE_RS22820-MONOMER"/>
<dbReference type="Proteomes" id="UP000001510">
    <property type="component" value="Chromosome"/>
</dbReference>
<dbReference type="GO" id="GO:0022627">
    <property type="term" value="C:cytosolic small ribosomal subunit"/>
    <property type="evidence" value="ECO:0007669"/>
    <property type="project" value="TreeGrafter"/>
</dbReference>
<dbReference type="GO" id="GO:0003723">
    <property type="term" value="F:RNA binding"/>
    <property type="evidence" value="ECO:0007669"/>
    <property type="project" value="TreeGrafter"/>
</dbReference>
<dbReference type="GO" id="GO:0003735">
    <property type="term" value="F:structural constituent of ribosome"/>
    <property type="evidence" value="ECO:0007669"/>
    <property type="project" value="InterPro"/>
</dbReference>
<dbReference type="GO" id="GO:0006412">
    <property type="term" value="P:translation"/>
    <property type="evidence" value="ECO:0007669"/>
    <property type="project" value="UniProtKB-UniRule"/>
</dbReference>
<dbReference type="FunFam" id="3.30.230.10:FF:000001">
    <property type="entry name" value="30S ribosomal protein S9"/>
    <property type="match status" value="1"/>
</dbReference>
<dbReference type="Gene3D" id="3.30.230.10">
    <property type="match status" value="1"/>
</dbReference>
<dbReference type="HAMAP" id="MF_00532_B">
    <property type="entry name" value="Ribosomal_uS9_B"/>
    <property type="match status" value="1"/>
</dbReference>
<dbReference type="InterPro" id="IPR020568">
    <property type="entry name" value="Ribosomal_Su5_D2-typ_SF"/>
</dbReference>
<dbReference type="InterPro" id="IPR000754">
    <property type="entry name" value="Ribosomal_uS9"/>
</dbReference>
<dbReference type="InterPro" id="IPR023035">
    <property type="entry name" value="Ribosomal_uS9_bac/plastid"/>
</dbReference>
<dbReference type="InterPro" id="IPR020574">
    <property type="entry name" value="Ribosomal_uS9_CS"/>
</dbReference>
<dbReference type="InterPro" id="IPR014721">
    <property type="entry name" value="Ribsml_uS5_D2-typ_fold_subgr"/>
</dbReference>
<dbReference type="NCBIfam" id="NF001099">
    <property type="entry name" value="PRK00132.1"/>
    <property type="match status" value="1"/>
</dbReference>
<dbReference type="PANTHER" id="PTHR21569">
    <property type="entry name" value="RIBOSOMAL PROTEIN S9"/>
    <property type="match status" value="1"/>
</dbReference>
<dbReference type="PANTHER" id="PTHR21569:SF1">
    <property type="entry name" value="SMALL RIBOSOMAL SUBUNIT PROTEIN US9M"/>
    <property type="match status" value="1"/>
</dbReference>
<dbReference type="Pfam" id="PF00380">
    <property type="entry name" value="Ribosomal_S9"/>
    <property type="match status" value="1"/>
</dbReference>
<dbReference type="SUPFAM" id="SSF54211">
    <property type="entry name" value="Ribosomal protein S5 domain 2-like"/>
    <property type="match status" value="1"/>
</dbReference>
<dbReference type="PROSITE" id="PS00360">
    <property type="entry name" value="RIBOSOMAL_S9"/>
    <property type="match status" value="1"/>
</dbReference>
<name>RS9_MICAN</name>
<gene>
    <name evidence="1" type="primary">rpsI</name>
    <name evidence="1" type="synonym">rps9</name>
    <name type="ordered locus">MAE_52500</name>
</gene>
<sequence>MQATDSKNKVVYWGTGRRKSAVAAVRLVPGTGAITVNGRDGETHFNRIPTYIQTIKAPLETLGLENEYDIIVKAEGGGLTGQADAVKLGVARALCQLAPENRPPLKSEGYLTRDPRAKERKKYGLHKARKAPQYSKR</sequence>
<protein>
    <recommendedName>
        <fullName evidence="1">Small ribosomal subunit protein uS9</fullName>
    </recommendedName>
    <alternativeName>
        <fullName evidence="3">30S ribosomal protein S9</fullName>
    </alternativeName>
</protein>
<evidence type="ECO:0000255" key="1">
    <source>
        <dbReference type="HAMAP-Rule" id="MF_00532"/>
    </source>
</evidence>
<evidence type="ECO:0000256" key="2">
    <source>
        <dbReference type="SAM" id="MobiDB-lite"/>
    </source>
</evidence>
<evidence type="ECO:0000305" key="3"/>
<comment type="similarity">
    <text evidence="1">Belongs to the universal ribosomal protein uS9 family.</text>
</comment>